<gene>
    <name evidence="1" type="primary">recR</name>
    <name type="ordered locus">PPA0206</name>
</gene>
<feature type="chain" id="PRO_0000190363" description="Recombination protein RecR">
    <location>
        <begin position="1"/>
        <end position="201"/>
    </location>
</feature>
<feature type="domain" description="Toprim" evidence="1">
    <location>
        <begin position="79"/>
        <end position="174"/>
    </location>
</feature>
<feature type="zinc finger region" description="C4-type" evidence="1">
    <location>
        <begin position="56"/>
        <end position="71"/>
    </location>
</feature>
<name>RECR_CUTAK</name>
<keyword id="KW-0227">DNA damage</keyword>
<keyword id="KW-0233">DNA recombination</keyword>
<keyword id="KW-0234">DNA repair</keyword>
<keyword id="KW-0479">Metal-binding</keyword>
<keyword id="KW-0862">Zinc</keyword>
<keyword id="KW-0863">Zinc-finger</keyword>
<organism>
    <name type="scientific">Cutibacterium acnes (strain DSM 16379 / KPA171202)</name>
    <name type="common">Propionibacterium acnes</name>
    <dbReference type="NCBI Taxonomy" id="267747"/>
    <lineage>
        <taxon>Bacteria</taxon>
        <taxon>Bacillati</taxon>
        <taxon>Actinomycetota</taxon>
        <taxon>Actinomycetes</taxon>
        <taxon>Propionibacteriales</taxon>
        <taxon>Propionibacteriaceae</taxon>
        <taxon>Cutibacterium</taxon>
    </lineage>
</organism>
<comment type="function">
    <text evidence="1">May play a role in DNA repair. It seems to be involved in an RecBC-independent recombinational process of DNA repair. It may act with RecF and RecO.</text>
</comment>
<comment type="similarity">
    <text evidence="1">Belongs to the RecR family.</text>
</comment>
<protein>
    <recommendedName>
        <fullName evidence="1">Recombination protein RecR</fullName>
    </recommendedName>
</protein>
<accession>Q6AB99</accession>
<evidence type="ECO:0000255" key="1">
    <source>
        <dbReference type="HAMAP-Rule" id="MF_00017"/>
    </source>
</evidence>
<reference key="1">
    <citation type="journal article" date="2004" name="Science">
        <title>The complete genome sequence of Propionibacterium acnes, a commensal of human skin.</title>
        <authorList>
            <person name="Brueggemann H."/>
            <person name="Henne A."/>
            <person name="Hoster F."/>
            <person name="Liesegang H."/>
            <person name="Wiezer A."/>
            <person name="Strittmatter A."/>
            <person name="Hujer S."/>
            <person name="Duerre P."/>
            <person name="Gottschalk G."/>
        </authorList>
    </citation>
    <scope>NUCLEOTIDE SEQUENCE [LARGE SCALE GENOMIC DNA]</scope>
    <source>
        <strain>DSM 16379 / KPA171202</strain>
    </source>
</reference>
<dbReference type="EMBL" id="AE017283">
    <property type="protein sequence ID" value="AAT81967.1"/>
    <property type="molecule type" value="Genomic_DNA"/>
</dbReference>
<dbReference type="RefSeq" id="WP_002512927.1">
    <property type="nucleotide sequence ID" value="NZ_CP025935.1"/>
</dbReference>
<dbReference type="SMR" id="Q6AB99"/>
<dbReference type="EnsemblBacteria" id="AAT81967">
    <property type="protein sequence ID" value="AAT81967"/>
    <property type="gene ID" value="PPA0206"/>
</dbReference>
<dbReference type="GeneID" id="92856197"/>
<dbReference type="KEGG" id="pac:PPA0206"/>
<dbReference type="eggNOG" id="COG0353">
    <property type="taxonomic scope" value="Bacteria"/>
</dbReference>
<dbReference type="HOGENOM" id="CLU_060739_1_0_11"/>
<dbReference type="Proteomes" id="UP000000603">
    <property type="component" value="Chromosome"/>
</dbReference>
<dbReference type="GO" id="GO:0003677">
    <property type="term" value="F:DNA binding"/>
    <property type="evidence" value="ECO:0007669"/>
    <property type="project" value="UniProtKB-UniRule"/>
</dbReference>
<dbReference type="GO" id="GO:0008270">
    <property type="term" value="F:zinc ion binding"/>
    <property type="evidence" value="ECO:0007669"/>
    <property type="project" value="UniProtKB-KW"/>
</dbReference>
<dbReference type="GO" id="GO:0006310">
    <property type="term" value="P:DNA recombination"/>
    <property type="evidence" value="ECO:0007669"/>
    <property type="project" value="UniProtKB-UniRule"/>
</dbReference>
<dbReference type="GO" id="GO:0006281">
    <property type="term" value="P:DNA repair"/>
    <property type="evidence" value="ECO:0007669"/>
    <property type="project" value="UniProtKB-UniRule"/>
</dbReference>
<dbReference type="CDD" id="cd01025">
    <property type="entry name" value="TOPRIM_recR"/>
    <property type="match status" value="1"/>
</dbReference>
<dbReference type="Gene3D" id="3.30.60.80">
    <property type="match status" value="1"/>
</dbReference>
<dbReference type="Gene3D" id="3.40.1360.10">
    <property type="match status" value="1"/>
</dbReference>
<dbReference type="Gene3D" id="6.10.250.240">
    <property type="match status" value="1"/>
</dbReference>
<dbReference type="Gene3D" id="1.10.8.420">
    <property type="entry name" value="RecR Domain 1"/>
    <property type="match status" value="1"/>
</dbReference>
<dbReference type="HAMAP" id="MF_00017">
    <property type="entry name" value="RecR"/>
    <property type="match status" value="1"/>
</dbReference>
<dbReference type="InterPro" id="IPR000093">
    <property type="entry name" value="DNA_Rcmb_RecR"/>
</dbReference>
<dbReference type="InterPro" id="IPR023627">
    <property type="entry name" value="Rcmb_RecR"/>
</dbReference>
<dbReference type="InterPro" id="IPR015967">
    <property type="entry name" value="Rcmb_RecR_Znf"/>
</dbReference>
<dbReference type="InterPro" id="IPR006171">
    <property type="entry name" value="TOPRIM_dom"/>
</dbReference>
<dbReference type="InterPro" id="IPR034137">
    <property type="entry name" value="TOPRIM_RecR"/>
</dbReference>
<dbReference type="NCBIfam" id="TIGR00615">
    <property type="entry name" value="recR"/>
    <property type="match status" value="1"/>
</dbReference>
<dbReference type="PANTHER" id="PTHR30446">
    <property type="entry name" value="RECOMBINATION PROTEIN RECR"/>
    <property type="match status" value="1"/>
</dbReference>
<dbReference type="PANTHER" id="PTHR30446:SF0">
    <property type="entry name" value="RECOMBINATION PROTEIN RECR"/>
    <property type="match status" value="1"/>
</dbReference>
<dbReference type="Pfam" id="PF21175">
    <property type="entry name" value="RecR_C"/>
    <property type="match status" value="1"/>
</dbReference>
<dbReference type="Pfam" id="PF21176">
    <property type="entry name" value="RecR_HhH"/>
    <property type="match status" value="1"/>
</dbReference>
<dbReference type="Pfam" id="PF02132">
    <property type="entry name" value="RecR_ZnF"/>
    <property type="match status" value="1"/>
</dbReference>
<dbReference type="Pfam" id="PF13662">
    <property type="entry name" value="Toprim_4"/>
    <property type="match status" value="1"/>
</dbReference>
<dbReference type="SMART" id="SM00493">
    <property type="entry name" value="TOPRIM"/>
    <property type="match status" value="1"/>
</dbReference>
<dbReference type="SUPFAM" id="SSF111304">
    <property type="entry name" value="Recombination protein RecR"/>
    <property type="match status" value="1"/>
</dbReference>
<dbReference type="PROSITE" id="PS50880">
    <property type="entry name" value="TOPRIM"/>
    <property type="match status" value="1"/>
</dbReference>
<proteinExistence type="inferred from homology"/>
<sequence length="201" mass="21820">MYDGPLQELIDALSRLPGIGPKGAQRIAFHILDAPAEEANELADALREVKEKAKFCKICFNVSSDEVCQYCRDPRRDQSMICVVEESKDVIAVERTRQFRGLYHVLGGAISPLDGKGPADLHIRELCQRLADETVTEVILATNPNLEGEATATYLSRLIAPMGVTVSRLASGLPVGGDLEYADEVTLGRAFEGRLHVGVGA</sequence>